<organism>
    <name type="scientific">Rhodopseudomonas palustris (strain ATCC BAA-98 / CGA009)</name>
    <dbReference type="NCBI Taxonomy" id="258594"/>
    <lineage>
        <taxon>Bacteria</taxon>
        <taxon>Pseudomonadati</taxon>
        <taxon>Pseudomonadota</taxon>
        <taxon>Alphaproteobacteria</taxon>
        <taxon>Hyphomicrobiales</taxon>
        <taxon>Nitrobacteraceae</taxon>
        <taxon>Rhodopseudomonas</taxon>
    </lineage>
</organism>
<dbReference type="EC" id="3.1.-.-" evidence="1"/>
<dbReference type="EMBL" id="BX572594">
    <property type="protein sequence ID" value="CAE25890.1"/>
    <property type="molecule type" value="Genomic_DNA"/>
</dbReference>
<dbReference type="SMR" id="Q6NCM6"/>
<dbReference type="STRING" id="258594.RPA0446"/>
<dbReference type="eggNOG" id="COG0319">
    <property type="taxonomic scope" value="Bacteria"/>
</dbReference>
<dbReference type="HOGENOM" id="CLU_106710_0_0_5"/>
<dbReference type="PhylomeDB" id="Q6NCM6"/>
<dbReference type="GO" id="GO:0005737">
    <property type="term" value="C:cytoplasm"/>
    <property type="evidence" value="ECO:0007669"/>
    <property type="project" value="UniProtKB-SubCell"/>
</dbReference>
<dbReference type="GO" id="GO:0004222">
    <property type="term" value="F:metalloendopeptidase activity"/>
    <property type="evidence" value="ECO:0007669"/>
    <property type="project" value="InterPro"/>
</dbReference>
<dbReference type="GO" id="GO:0004521">
    <property type="term" value="F:RNA endonuclease activity"/>
    <property type="evidence" value="ECO:0007669"/>
    <property type="project" value="UniProtKB-UniRule"/>
</dbReference>
<dbReference type="GO" id="GO:0008270">
    <property type="term" value="F:zinc ion binding"/>
    <property type="evidence" value="ECO:0007669"/>
    <property type="project" value="UniProtKB-UniRule"/>
</dbReference>
<dbReference type="GO" id="GO:0006364">
    <property type="term" value="P:rRNA processing"/>
    <property type="evidence" value="ECO:0007669"/>
    <property type="project" value="UniProtKB-UniRule"/>
</dbReference>
<dbReference type="Gene3D" id="3.40.390.30">
    <property type="entry name" value="Metalloproteases ('zincins'), catalytic domain"/>
    <property type="match status" value="1"/>
</dbReference>
<dbReference type="HAMAP" id="MF_00009">
    <property type="entry name" value="Endoribonucl_YbeY"/>
    <property type="match status" value="1"/>
</dbReference>
<dbReference type="InterPro" id="IPR023091">
    <property type="entry name" value="MetalPrtase_cat_dom_sf_prd"/>
</dbReference>
<dbReference type="InterPro" id="IPR002036">
    <property type="entry name" value="YbeY"/>
</dbReference>
<dbReference type="InterPro" id="IPR020549">
    <property type="entry name" value="YbeY_CS"/>
</dbReference>
<dbReference type="NCBIfam" id="TIGR00043">
    <property type="entry name" value="rRNA maturation RNase YbeY"/>
    <property type="match status" value="1"/>
</dbReference>
<dbReference type="PANTHER" id="PTHR46986">
    <property type="entry name" value="ENDORIBONUCLEASE YBEY, CHLOROPLASTIC"/>
    <property type="match status" value="1"/>
</dbReference>
<dbReference type="PANTHER" id="PTHR46986:SF1">
    <property type="entry name" value="ENDORIBONUCLEASE YBEY, CHLOROPLASTIC"/>
    <property type="match status" value="1"/>
</dbReference>
<dbReference type="Pfam" id="PF02130">
    <property type="entry name" value="YbeY"/>
    <property type="match status" value="1"/>
</dbReference>
<dbReference type="SUPFAM" id="SSF55486">
    <property type="entry name" value="Metalloproteases ('zincins'), catalytic domain"/>
    <property type="match status" value="1"/>
</dbReference>
<dbReference type="PROSITE" id="PS01306">
    <property type="entry name" value="UPF0054"/>
    <property type="match status" value="1"/>
</dbReference>
<name>YBEY_RHOPA</name>
<evidence type="ECO:0000255" key="1">
    <source>
        <dbReference type="HAMAP-Rule" id="MF_00009"/>
    </source>
</evidence>
<evidence type="ECO:0000256" key="2">
    <source>
        <dbReference type="SAM" id="MobiDB-lite"/>
    </source>
</evidence>
<protein>
    <recommendedName>
        <fullName evidence="1">Endoribonuclease YbeY</fullName>
        <ecNumber evidence="1">3.1.-.-</ecNumber>
    </recommendedName>
</protein>
<proteinExistence type="inferred from homology"/>
<gene>
    <name evidence="1" type="primary">ybeY</name>
    <name type="ordered locus">RPA0446</name>
</gene>
<accession>Q6NCM6</accession>
<feature type="chain" id="PRO_0000102517" description="Endoribonuclease YbeY">
    <location>
        <begin position="1"/>
        <end position="190"/>
    </location>
</feature>
<feature type="region of interest" description="Disordered" evidence="2">
    <location>
        <begin position="1"/>
        <end position="25"/>
    </location>
</feature>
<feature type="binding site" evidence="1">
    <location>
        <position position="147"/>
    </location>
    <ligand>
        <name>Zn(2+)</name>
        <dbReference type="ChEBI" id="CHEBI:29105"/>
        <note>catalytic</note>
    </ligand>
</feature>
<feature type="binding site" evidence="1">
    <location>
        <position position="151"/>
    </location>
    <ligand>
        <name>Zn(2+)</name>
        <dbReference type="ChEBI" id="CHEBI:29105"/>
        <note>catalytic</note>
    </ligand>
</feature>
<feature type="binding site" evidence="1">
    <location>
        <position position="157"/>
    </location>
    <ligand>
        <name>Zn(2+)</name>
        <dbReference type="ChEBI" id="CHEBI:29105"/>
        <note>catalytic</note>
    </ligand>
</feature>
<comment type="function">
    <text evidence="1">Single strand-specific metallo-endoribonuclease involved in late-stage 70S ribosome quality control and in maturation of the 3' terminus of the 16S rRNA.</text>
</comment>
<comment type="cofactor">
    <cofactor evidence="1">
        <name>Zn(2+)</name>
        <dbReference type="ChEBI" id="CHEBI:29105"/>
    </cofactor>
    <text evidence="1">Binds 1 zinc ion.</text>
</comment>
<comment type="subcellular location">
    <subcellularLocation>
        <location evidence="1">Cytoplasm</location>
    </subcellularLocation>
</comment>
<comment type="similarity">
    <text evidence="1">Belongs to the endoribonuclease YbeY family.</text>
</comment>
<sequence length="190" mass="20654">MSQPRPGHRPDCNGADPDSNFASMTHSARPFTEVVIEADCWQAEASAEATVLRAIETAADAVDADTGGAELAVMLTDDDHIRQLNASFRGKDKPTNVLSFPAAQPEVQPDGAPRMLGDIAIAYQTVRREADDEGKPFDHHLSHLAVHGFLHLVGYDHETEEEAEEMEDAERAILARLGIPDPYAGQDRVS</sequence>
<reference key="1">
    <citation type="journal article" date="2004" name="Nat. Biotechnol.">
        <title>Complete genome sequence of the metabolically versatile photosynthetic bacterium Rhodopseudomonas palustris.</title>
        <authorList>
            <person name="Larimer F.W."/>
            <person name="Chain P."/>
            <person name="Hauser L."/>
            <person name="Lamerdin J.E."/>
            <person name="Malfatti S."/>
            <person name="Do L."/>
            <person name="Land M.L."/>
            <person name="Pelletier D.A."/>
            <person name="Beatty J.T."/>
            <person name="Lang A.S."/>
            <person name="Tabita F.R."/>
            <person name="Gibson J.L."/>
            <person name="Hanson T.E."/>
            <person name="Bobst C."/>
            <person name="Torres y Torres J.L."/>
            <person name="Peres C."/>
            <person name="Harrison F.H."/>
            <person name="Gibson J."/>
            <person name="Harwood C.S."/>
        </authorList>
    </citation>
    <scope>NUCLEOTIDE SEQUENCE [LARGE SCALE GENOMIC DNA]</scope>
    <source>
        <strain>ATCC BAA-98 / CGA009</strain>
    </source>
</reference>
<keyword id="KW-0963">Cytoplasm</keyword>
<keyword id="KW-0255">Endonuclease</keyword>
<keyword id="KW-0378">Hydrolase</keyword>
<keyword id="KW-0479">Metal-binding</keyword>
<keyword id="KW-0540">Nuclease</keyword>
<keyword id="KW-0690">Ribosome biogenesis</keyword>
<keyword id="KW-0698">rRNA processing</keyword>
<keyword id="KW-0862">Zinc</keyword>